<keyword id="KW-0997">Cell inner membrane</keyword>
<keyword id="KW-1003">Cell membrane</keyword>
<keyword id="KW-0449">Lipoprotein</keyword>
<keyword id="KW-0472">Membrane</keyword>
<keyword id="KW-0564">Palmitate</keyword>
<keyword id="KW-1185">Reference proteome</keyword>
<keyword id="KW-0732">Signal</keyword>
<protein>
    <recommendedName>
        <fullName>Osmotically-inducible putative lipoprotein OsmE</fullName>
    </recommendedName>
    <alternativeName>
        <fullName>Activator of ntr-like gene protein</fullName>
    </alternativeName>
</protein>
<gene>
    <name type="primary">osmE</name>
    <name type="ordered locus">Z2769</name>
    <name type="ordered locus">ECs2445</name>
</gene>
<proteinExistence type="inferred from homology"/>
<dbReference type="EMBL" id="AE005174">
    <property type="protein sequence ID" value="AAG56725.1"/>
    <property type="molecule type" value="Genomic_DNA"/>
</dbReference>
<dbReference type="EMBL" id="BA000007">
    <property type="protein sequence ID" value="BAB35868.1"/>
    <property type="molecule type" value="Genomic_DNA"/>
</dbReference>
<dbReference type="PIR" id="A85783">
    <property type="entry name" value="A85783"/>
</dbReference>
<dbReference type="PIR" id="E90934">
    <property type="entry name" value="E90934"/>
</dbReference>
<dbReference type="RefSeq" id="NP_310472.1">
    <property type="nucleotide sequence ID" value="NC_002695.1"/>
</dbReference>
<dbReference type="RefSeq" id="WP_001039044.1">
    <property type="nucleotide sequence ID" value="NZ_VOAI01000007.1"/>
</dbReference>
<dbReference type="SMR" id="P0ADB2"/>
<dbReference type="STRING" id="155864.Z2769"/>
<dbReference type="GeneID" id="912936"/>
<dbReference type="GeneID" id="93775952"/>
<dbReference type="KEGG" id="ece:Z2769"/>
<dbReference type="KEGG" id="ecs:ECs_2445"/>
<dbReference type="PATRIC" id="fig|386585.9.peg.2559"/>
<dbReference type="eggNOG" id="COG2913">
    <property type="taxonomic scope" value="Bacteria"/>
</dbReference>
<dbReference type="HOGENOM" id="CLU_161369_1_0_6"/>
<dbReference type="OMA" id="VTMIHAR"/>
<dbReference type="Proteomes" id="UP000000558">
    <property type="component" value="Chromosome"/>
</dbReference>
<dbReference type="Proteomes" id="UP000002519">
    <property type="component" value="Chromosome"/>
</dbReference>
<dbReference type="GO" id="GO:0019867">
    <property type="term" value="C:outer membrane"/>
    <property type="evidence" value="ECO:0007669"/>
    <property type="project" value="InterPro"/>
</dbReference>
<dbReference type="GO" id="GO:0005886">
    <property type="term" value="C:plasma membrane"/>
    <property type="evidence" value="ECO:0007669"/>
    <property type="project" value="UniProtKB-SubCell"/>
</dbReference>
<dbReference type="FunFam" id="3.30.1450.10:FF:000002">
    <property type="entry name" value="Osmotically inducible lipoprotein E"/>
    <property type="match status" value="1"/>
</dbReference>
<dbReference type="Gene3D" id="3.30.1450.10">
    <property type="match status" value="1"/>
</dbReference>
<dbReference type="InterPro" id="IPR037873">
    <property type="entry name" value="BamE-like"/>
</dbReference>
<dbReference type="InterPro" id="IPR007450">
    <property type="entry name" value="BamE_dom"/>
</dbReference>
<dbReference type="NCBIfam" id="NF008423">
    <property type="entry name" value="PRK11251.1"/>
    <property type="match status" value="1"/>
</dbReference>
<dbReference type="Pfam" id="PF04355">
    <property type="entry name" value="BamE"/>
    <property type="match status" value="1"/>
</dbReference>
<dbReference type="PROSITE" id="PS51257">
    <property type="entry name" value="PROKAR_LIPOPROTEIN"/>
    <property type="match status" value="1"/>
</dbReference>
<accession>P0ADB2</accession>
<accession>P23933</accession>
<evidence type="ECO:0000255" key="1">
    <source>
        <dbReference type="PROSITE-ProRule" id="PRU00303"/>
    </source>
</evidence>
<evidence type="ECO:0000305" key="2"/>
<feature type="signal peptide" evidence="1">
    <location>
        <begin position="1"/>
        <end position="20"/>
    </location>
</feature>
<feature type="chain" id="PRO_0000043188" description="Osmotically-inducible putative lipoprotein OsmE">
    <location>
        <begin position="21"/>
        <end position="112"/>
    </location>
</feature>
<feature type="lipid moiety-binding region" description="N-palmitoyl cysteine" evidence="2">
    <location>
        <position position="21"/>
    </location>
</feature>
<feature type="lipid moiety-binding region" description="S-diacylglycerol cysteine" evidence="2">
    <location>
        <position position="21"/>
    </location>
</feature>
<reference key="1">
    <citation type="journal article" date="2001" name="Nature">
        <title>Genome sequence of enterohaemorrhagic Escherichia coli O157:H7.</title>
        <authorList>
            <person name="Perna N.T."/>
            <person name="Plunkett G. III"/>
            <person name="Burland V."/>
            <person name="Mau B."/>
            <person name="Glasner J.D."/>
            <person name="Rose D.J."/>
            <person name="Mayhew G.F."/>
            <person name="Evans P.S."/>
            <person name="Gregor J."/>
            <person name="Kirkpatrick H.A."/>
            <person name="Posfai G."/>
            <person name="Hackett J."/>
            <person name="Klink S."/>
            <person name="Boutin A."/>
            <person name="Shao Y."/>
            <person name="Miller L."/>
            <person name="Grotbeck E.J."/>
            <person name="Davis N.W."/>
            <person name="Lim A."/>
            <person name="Dimalanta E.T."/>
            <person name="Potamousis K."/>
            <person name="Apodaca J."/>
            <person name="Anantharaman T.S."/>
            <person name="Lin J."/>
            <person name="Yen G."/>
            <person name="Schwartz D.C."/>
            <person name="Welch R.A."/>
            <person name="Blattner F.R."/>
        </authorList>
    </citation>
    <scope>NUCLEOTIDE SEQUENCE [LARGE SCALE GENOMIC DNA]</scope>
    <source>
        <strain>O157:H7 / EDL933 / ATCC 700927 / EHEC</strain>
    </source>
</reference>
<reference key="2">
    <citation type="journal article" date="2001" name="DNA Res.">
        <title>Complete genome sequence of enterohemorrhagic Escherichia coli O157:H7 and genomic comparison with a laboratory strain K-12.</title>
        <authorList>
            <person name="Hayashi T."/>
            <person name="Makino K."/>
            <person name="Ohnishi M."/>
            <person name="Kurokawa K."/>
            <person name="Ishii K."/>
            <person name="Yokoyama K."/>
            <person name="Han C.-G."/>
            <person name="Ohtsubo E."/>
            <person name="Nakayama K."/>
            <person name="Murata T."/>
            <person name="Tanaka M."/>
            <person name="Tobe T."/>
            <person name="Iida T."/>
            <person name="Takami H."/>
            <person name="Honda T."/>
            <person name="Sasakawa C."/>
            <person name="Ogasawara N."/>
            <person name="Yasunaga T."/>
            <person name="Kuhara S."/>
            <person name="Shiba T."/>
            <person name="Hattori M."/>
            <person name="Shinagawa H."/>
        </authorList>
    </citation>
    <scope>NUCLEOTIDE SEQUENCE [LARGE SCALE GENOMIC DNA]</scope>
    <source>
        <strain>O157:H7 / Sakai / RIMD 0509952 / EHEC</strain>
    </source>
</reference>
<organism>
    <name type="scientific">Escherichia coli O157:H7</name>
    <dbReference type="NCBI Taxonomy" id="83334"/>
    <lineage>
        <taxon>Bacteria</taxon>
        <taxon>Pseudomonadati</taxon>
        <taxon>Pseudomonadota</taxon>
        <taxon>Gammaproteobacteria</taxon>
        <taxon>Enterobacterales</taxon>
        <taxon>Enterobacteriaceae</taxon>
        <taxon>Escherichia</taxon>
    </lineage>
</organism>
<name>OSME_ECO57</name>
<comment type="subcellular location">
    <subcellularLocation>
        <location evidence="1">Cell inner membrane</location>
        <topology evidence="1">Lipid-anchor</topology>
    </subcellularLocation>
</comment>
<sequence length="112" mass="12021">MNKNMAGILSAAAVLTMLAGCTAYDRTKDQFVQPVVKDVKKGMSRAQVAQIAGKPSSEVSMIHARGTCQTYILGQRDGKAETYFVALDDTGHVINSGYQTCAEYDTDPQAAK</sequence>